<keyword id="KW-0028">Amino-acid biosynthesis</keyword>
<keyword id="KW-0055">Arginine biosynthesis</keyword>
<keyword id="KW-0963">Cytoplasm</keyword>
<keyword id="KW-0456">Lyase</keyword>
<feature type="chain" id="PRO_1000000533" description="Argininosuccinate lyase">
    <location>
        <begin position="1"/>
        <end position="471"/>
    </location>
</feature>
<sequence length="471" mass="50632">MSDAPVSSSAANAMWGGRFAAGPDAIMQAINASIGFDKRLYAQDIRGSRAHAAMLAAQGILSSRDAEAIGEGLLTVLSEIEAGGFPFRVGLEDIHMNVEARLKELIGEPAGRLHTARSRNDQVAVDFRLWVRDQCDAAITGIEALMQAFVAQAEAGADWVMPGFTHLQTAQPVTWGHHMLAYVEMLARDRSRFADARARMNECPLGAAALAGTGFPIDRHMTAAALGFDRPTANSLDSVSDRDFALEFLSASAICALHLSRFAEELVIWSSAQFRFVRLSDRWTTGSSIMPQKKNPDAAELLRAKLGRVLGAAVALFTVMKGLPLTYSKDMQEDKEQVFDAADTLMLGLAAMTGMVADMQANRESLAAAAASGFSTATDLADWLVRELDLPFRDAHHVTGTLVARAEARGCDLPDLTLAEMQEVHPGIREDVFAVLGVANSVRSRTSYGGTAPDNVRAQAARWKELLGGTA</sequence>
<accession>A4WVB9</accession>
<organism>
    <name type="scientific">Cereibacter sphaeroides (strain ATCC 17025 / ATH 2.4.3)</name>
    <name type="common">Rhodobacter sphaeroides</name>
    <dbReference type="NCBI Taxonomy" id="349102"/>
    <lineage>
        <taxon>Bacteria</taxon>
        <taxon>Pseudomonadati</taxon>
        <taxon>Pseudomonadota</taxon>
        <taxon>Alphaproteobacteria</taxon>
        <taxon>Rhodobacterales</taxon>
        <taxon>Paracoccaceae</taxon>
        <taxon>Cereibacter</taxon>
    </lineage>
</organism>
<protein>
    <recommendedName>
        <fullName evidence="1">Argininosuccinate lyase</fullName>
        <shortName evidence="1">ASAL</shortName>
        <ecNumber evidence="1">4.3.2.1</ecNumber>
    </recommendedName>
    <alternativeName>
        <fullName evidence="1">Arginosuccinase</fullName>
    </alternativeName>
</protein>
<proteinExistence type="inferred from homology"/>
<reference key="1">
    <citation type="submission" date="2007-04" db="EMBL/GenBank/DDBJ databases">
        <title>Complete sequence of chromosome of Rhodobacter sphaeroides ATCC 17025.</title>
        <authorList>
            <consortium name="US DOE Joint Genome Institute"/>
            <person name="Copeland A."/>
            <person name="Lucas S."/>
            <person name="Lapidus A."/>
            <person name="Barry K."/>
            <person name="Detter J.C."/>
            <person name="Glavina del Rio T."/>
            <person name="Hammon N."/>
            <person name="Israni S."/>
            <person name="Dalin E."/>
            <person name="Tice H."/>
            <person name="Pitluck S."/>
            <person name="Chertkov O."/>
            <person name="Brettin T."/>
            <person name="Bruce D."/>
            <person name="Han C."/>
            <person name="Schmutz J."/>
            <person name="Larimer F."/>
            <person name="Land M."/>
            <person name="Hauser L."/>
            <person name="Kyrpides N."/>
            <person name="Kim E."/>
            <person name="Richardson P."/>
            <person name="Mackenzie C."/>
            <person name="Choudhary M."/>
            <person name="Donohue T.J."/>
            <person name="Kaplan S."/>
        </authorList>
    </citation>
    <scope>NUCLEOTIDE SEQUENCE [LARGE SCALE GENOMIC DNA]</scope>
    <source>
        <strain>ATCC 17025 / ATH 2.4.3</strain>
    </source>
</reference>
<name>ARLY_CERS5</name>
<gene>
    <name evidence="1" type="primary">argH</name>
    <name type="ordered locus">Rsph17025_2445</name>
</gene>
<comment type="catalytic activity">
    <reaction evidence="1">
        <text>2-(N(omega)-L-arginino)succinate = fumarate + L-arginine</text>
        <dbReference type="Rhea" id="RHEA:24020"/>
        <dbReference type="ChEBI" id="CHEBI:29806"/>
        <dbReference type="ChEBI" id="CHEBI:32682"/>
        <dbReference type="ChEBI" id="CHEBI:57472"/>
        <dbReference type="EC" id="4.3.2.1"/>
    </reaction>
</comment>
<comment type="pathway">
    <text evidence="1">Amino-acid biosynthesis; L-arginine biosynthesis; L-arginine from L-ornithine and carbamoyl phosphate: step 3/3.</text>
</comment>
<comment type="subcellular location">
    <subcellularLocation>
        <location evidence="1">Cytoplasm</location>
    </subcellularLocation>
</comment>
<comment type="similarity">
    <text evidence="1">Belongs to the lyase 1 family. Argininosuccinate lyase subfamily.</text>
</comment>
<dbReference type="EC" id="4.3.2.1" evidence="1"/>
<dbReference type="EMBL" id="CP000661">
    <property type="protein sequence ID" value="ABP71333.1"/>
    <property type="molecule type" value="Genomic_DNA"/>
</dbReference>
<dbReference type="SMR" id="A4WVB9"/>
<dbReference type="STRING" id="349102.Rsph17025_2445"/>
<dbReference type="KEGG" id="rsq:Rsph17025_2445"/>
<dbReference type="eggNOG" id="COG0165">
    <property type="taxonomic scope" value="Bacteria"/>
</dbReference>
<dbReference type="HOGENOM" id="CLU_027272_2_3_5"/>
<dbReference type="BioCyc" id="RSPH349102:G1G8M-2520-MONOMER"/>
<dbReference type="UniPathway" id="UPA00068">
    <property type="reaction ID" value="UER00114"/>
</dbReference>
<dbReference type="GO" id="GO:0005829">
    <property type="term" value="C:cytosol"/>
    <property type="evidence" value="ECO:0007669"/>
    <property type="project" value="TreeGrafter"/>
</dbReference>
<dbReference type="GO" id="GO:0004056">
    <property type="term" value="F:argininosuccinate lyase activity"/>
    <property type="evidence" value="ECO:0007669"/>
    <property type="project" value="UniProtKB-UniRule"/>
</dbReference>
<dbReference type="GO" id="GO:0042450">
    <property type="term" value="P:arginine biosynthetic process via ornithine"/>
    <property type="evidence" value="ECO:0007669"/>
    <property type="project" value="InterPro"/>
</dbReference>
<dbReference type="GO" id="GO:0006526">
    <property type="term" value="P:L-arginine biosynthetic process"/>
    <property type="evidence" value="ECO:0007669"/>
    <property type="project" value="UniProtKB-UniRule"/>
</dbReference>
<dbReference type="CDD" id="cd01359">
    <property type="entry name" value="Argininosuccinate_lyase"/>
    <property type="match status" value="1"/>
</dbReference>
<dbReference type="FunFam" id="1.10.275.10:FF:000002">
    <property type="entry name" value="Argininosuccinate lyase"/>
    <property type="match status" value="1"/>
</dbReference>
<dbReference type="FunFam" id="1.10.40.30:FF:000001">
    <property type="entry name" value="Argininosuccinate lyase"/>
    <property type="match status" value="1"/>
</dbReference>
<dbReference type="FunFam" id="1.20.200.10:FF:000015">
    <property type="entry name" value="argininosuccinate lyase isoform X2"/>
    <property type="match status" value="1"/>
</dbReference>
<dbReference type="Gene3D" id="1.10.40.30">
    <property type="entry name" value="Fumarase/aspartase (C-terminal domain)"/>
    <property type="match status" value="1"/>
</dbReference>
<dbReference type="Gene3D" id="1.20.200.10">
    <property type="entry name" value="Fumarase/aspartase (Central domain)"/>
    <property type="match status" value="1"/>
</dbReference>
<dbReference type="Gene3D" id="1.10.275.10">
    <property type="entry name" value="Fumarase/aspartase (N-terminal domain)"/>
    <property type="match status" value="1"/>
</dbReference>
<dbReference type="HAMAP" id="MF_00006">
    <property type="entry name" value="Arg_succ_lyase"/>
    <property type="match status" value="1"/>
</dbReference>
<dbReference type="InterPro" id="IPR029419">
    <property type="entry name" value="Arg_succ_lyase_C"/>
</dbReference>
<dbReference type="InterPro" id="IPR009049">
    <property type="entry name" value="Argininosuccinate_lyase"/>
</dbReference>
<dbReference type="InterPro" id="IPR024083">
    <property type="entry name" value="Fumarase/histidase_N"/>
</dbReference>
<dbReference type="InterPro" id="IPR020557">
    <property type="entry name" value="Fumarate_lyase_CS"/>
</dbReference>
<dbReference type="InterPro" id="IPR000362">
    <property type="entry name" value="Fumarate_lyase_fam"/>
</dbReference>
<dbReference type="InterPro" id="IPR022761">
    <property type="entry name" value="Fumarate_lyase_N"/>
</dbReference>
<dbReference type="InterPro" id="IPR008948">
    <property type="entry name" value="L-Aspartase-like"/>
</dbReference>
<dbReference type="NCBIfam" id="TIGR00838">
    <property type="entry name" value="argH"/>
    <property type="match status" value="1"/>
</dbReference>
<dbReference type="PANTHER" id="PTHR43814">
    <property type="entry name" value="ARGININOSUCCINATE LYASE"/>
    <property type="match status" value="1"/>
</dbReference>
<dbReference type="PANTHER" id="PTHR43814:SF1">
    <property type="entry name" value="ARGININOSUCCINATE LYASE"/>
    <property type="match status" value="1"/>
</dbReference>
<dbReference type="Pfam" id="PF14698">
    <property type="entry name" value="ASL_C2"/>
    <property type="match status" value="1"/>
</dbReference>
<dbReference type="Pfam" id="PF00206">
    <property type="entry name" value="Lyase_1"/>
    <property type="match status" value="1"/>
</dbReference>
<dbReference type="PRINTS" id="PR00145">
    <property type="entry name" value="ARGSUCLYASE"/>
</dbReference>
<dbReference type="PRINTS" id="PR00149">
    <property type="entry name" value="FUMRATELYASE"/>
</dbReference>
<dbReference type="SUPFAM" id="SSF48557">
    <property type="entry name" value="L-aspartase-like"/>
    <property type="match status" value="1"/>
</dbReference>
<dbReference type="PROSITE" id="PS00163">
    <property type="entry name" value="FUMARATE_LYASES"/>
    <property type="match status" value="1"/>
</dbReference>
<evidence type="ECO:0000255" key="1">
    <source>
        <dbReference type="HAMAP-Rule" id="MF_00006"/>
    </source>
</evidence>